<feature type="signal peptide" evidence="2">
    <location>
        <begin position="1"/>
        <end position="19"/>
    </location>
</feature>
<feature type="chain" id="PRO_0000399071" description="Increased recombination centers protein 22-2">
    <location>
        <begin position="20"/>
        <end position="239"/>
    </location>
</feature>
<feature type="topological domain" description="Lumenal" evidence="2">
    <location>
        <begin position="20"/>
        <end position="161"/>
    </location>
</feature>
<feature type="transmembrane region" description="Helical" evidence="2">
    <location>
        <begin position="162"/>
        <end position="182"/>
    </location>
</feature>
<feature type="topological domain" description="Cytoplasmic" evidence="2">
    <location>
        <begin position="183"/>
        <end position="239"/>
    </location>
</feature>
<feature type="region of interest" description="Disordered" evidence="3">
    <location>
        <begin position="202"/>
        <end position="222"/>
    </location>
</feature>
<feature type="compositionally biased region" description="Polar residues" evidence="3">
    <location>
        <begin position="211"/>
        <end position="221"/>
    </location>
</feature>
<sequence>MKLSTIFTAFAATIATVAGYETTGSKQTVDILIDYIIKETPELSQNDVANWENGDTVTLQYVVNNNEESEITVVGVTGQFKNPINNEIVTNLTTGKVGPIAVPPGEAIKFDQKINVDLIPANYELIPHVFIAQDSLIKVIPCRGQLATIVDAAVSFFDPRLIFLELVLLITFAGLIYVGYEIWGKQYFKGVAPVKAKKVSAAKASSPVATGPSTTSATGYDTNWIPESHLKQKKTKKVN</sequence>
<evidence type="ECO:0000250" key="1"/>
<evidence type="ECO:0000255" key="2"/>
<evidence type="ECO:0000256" key="3">
    <source>
        <dbReference type="SAM" id="MobiDB-lite"/>
    </source>
</evidence>
<evidence type="ECO:0000305" key="4"/>
<proteinExistence type="inferred from homology"/>
<comment type="function">
    <text>Is probably involved in a pathway contributing to genomic integrity.</text>
</comment>
<comment type="subcellular location">
    <subcellularLocation>
        <location evidence="1">Endoplasmic reticulum membrane</location>
        <topology evidence="1">Single-pass type I membrane protein</topology>
    </subcellularLocation>
</comment>
<comment type="similarity">
    <text evidence="4">Belongs to the IRC22 family.</text>
</comment>
<keyword id="KW-0256">Endoplasmic reticulum</keyword>
<keyword id="KW-0472">Membrane</keyword>
<keyword id="KW-1185">Reference proteome</keyword>
<keyword id="KW-0732">Signal</keyword>
<keyword id="KW-0812">Transmembrane</keyword>
<keyword id="KW-1133">Transmembrane helix</keyword>
<protein>
    <recommendedName>
        <fullName>Increased recombination centers protein 22-2</fullName>
    </recommendedName>
</protein>
<accession>Q59XW9</accession>
<accession>A0A1D8PIM9</accession>
<accession>Q59XS6</accession>
<organism>
    <name type="scientific">Candida albicans (strain SC5314 / ATCC MYA-2876)</name>
    <name type="common">Yeast</name>
    <dbReference type="NCBI Taxonomy" id="237561"/>
    <lineage>
        <taxon>Eukaryota</taxon>
        <taxon>Fungi</taxon>
        <taxon>Dikarya</taxon>
        <taxon>Ascomycota</taxon>
        <taxon>Saccharomycotina</taxon>
        <taxon>Pichiomycetes</taxon>
        <taxon>Debaryomycetaceae</taxon>
        <taxon>Candida/Lodderomyces clade</taxon>
        <taxon>Candida</taxon>
    </lineage>
</organism>
<reference key="1">
    <citation type="journal article" date="2004" name="Proc. Natl. Acad. Sci. U.S.A.">
        <title>The diploid genome sequence of Candida albicans.</title>
        <authorList>
            <person name="Jones T."/>
            <person name="Federspiel N.A."/>
            <person name="Chibana H."/>
            <person name="Dungan J."/>
            <person name="Kalman S."/>
            <person name="Magee B.B."/>
            <person name="Newport G."/>
            <person name="Thorstenson Y.R."/>
            <person name="Agabian N."/>
            <person name="Magee P.T."/>
            <person name="Davis R.W."/>
            <person name="Scherer S."/>
        </authorList>
    </citation>
    <scope>NUCLEOTIDE SEQUENCE [LARGE SCALE GENOMIC DNA]</scope>
    <source>
        <strain>SC5314 / ATCC MYA-2876</strain>
    </source>
</reference>
<reference key="2">
    <citation type="journal article" date="2007" name="Genome Biol.">
        <title>Assembly of the Candida albicans genome into sixteen supercontigs aligned on the eight chromosomes.</title>
        <authorList>
            <person name="van het Hoog M."/>
            <person name="Rast T.J."/>
            <person name="Martchenko M."/>
            <person name="Grindle S."/>
            <person name="Dignard D."/>
            <person name="Hogues H."/>
            <person name="Cuomo C."/>
            <person name="Berriman M."/>
            <person name="Scherer S."/>
            <person name="Magee B.B."/>
            <person name="Whiteway M."/>
            <person name="Chibana H."/>
            <person name="Nantel A."/>
            <person name="Magee P.T."/>
        </authorList>
    </citation>
    <scope>GENOME REANNOTATION</scope>
    <source>
        <strain>SC5314 / ATCC MYA-2876</strain>
    </source>
</reference>
<reference key="3">
    <citation type="journal article" date="2013" name="Genome Biol.">
        <title>Assembly of a phased diploid Candida albicans genome facilitates allele-specific measurements and provides a simple model for repeat and indel structure.</title>
        <authorList>
            <person name="Muzzey D."/>
            <person name="Schwartz K."/>
            <person name="Weissman J.S."/>
            <person name="Sherlock G."/>
        </authorList>
    </citation>
    <scope>NUCLEOTIDE SEQUENCE [LARGE SCALE GENOMIC DNA]</scope>
    <scope>GENOME REANNOTATION</scope>
    <source>
        <strain>SC5314 / ATCC MYA-2876</strain>
    </source>
</reference>
<name>IR222_CANAL</name>
<gene>
    <name type="primary">IRC22-2</name>
    <name type="ordered locus">CAALFM_C210010CA</name>
    <name type="ORF">CaO19.1782</name>
    <name type="ORF">CaO19.9348</name>
</gene>
<dbReference type="EMBL" id="CP017624">
    <property type="protein sequence ID" value="AOW27979.1"/>
    <property type="molecule type" value="Genomic_DNA"/>
</dbReference>
<dbReference type="RefSeq" id="XP_714427.2">
    <property type="nucleotide sequence ID" value="XM_709334.2"/>
</dbReference>
<dbReference type="FunCoup" id="Q59XW9">
    <property type="interactions" value="32"/>
</dbReference>
<dbReference type="STRING" id="237561.Q59XW9"/>
<dbReference type="EnsemblFungi" id="C2_10010C_A-T">
    <property type="protein sequence ID" value="C2_10010C_A-T-p1"/>
    <property type="gene ID" value="C2_10010C_A"/>
</dbReference>
<dbReference type="GeneID" id="3643962"/>
<dbReference type="KEGG" id="cal:CAALFM_C210010CA"/>
<dbReference type="CGD" id="CAL0000187589">
    <property type="gene designation" value="orf19.9348"/>
</dbReference>
<dbReference type="VEuPathDB" id="FungiDB:C2_10010C_A"/>
<dbReference type="eggNOG" id="ENOG502S7BF">
    <property type="taxonomic scope" value="Eukaryota"/>
</dbReference>
<dbReference type="HOGENOM" id="CLU_078554_0_0_1"/>
<dbReference type="InParanoid" id="Q59XW9"/>
<dbReference type="OrthoDB" id="1926781at2759"/>
<dbReference type="PRO" id="PR:Q59XW9"/>
<dbReference type="Proteomes" id="UP000000559">
    <property type="component" value="Chromosome 2"/>
</dbReference>
<dbReference type="GO" id="GO:0005783">
    <property type="term" value="C:endoplasmic reticulum"/>
    <property type="evidence" value="ECO:0000318"/>
    <property type="project" value="GO_Central"/>
</dbReference>
<dbReference type="GO" id="GO:0005789">
    <property type="term" value="C:endoplasmic reticulum membrane"/>
    <property type="evidence" value="ECO:0007669"/>
    <property type="project" value="UniProtKB-SubCell"/>
</dbReference>
<dbReference type="GO" id="GO:0005886">
    <property type="term" value="C:plasma membrane"/>
    <property type="evidence" value="ECO:0000314"/>
    <property type="project" value="CGD"/>
</dbReference>
<dbReference type="InterPro" id="IPR005595">
    <property type="entry name" value="TRAP_alpha"/>
</dbReference>
<dbReference type="PANTHER" id="PTHR12924:SF0">
    <property type="entry name" value="TRANSLOCON-ASSOCIATED PROTEIN SUBUNIT ALPHA"/>
    <property type="match status" value="1"/>
</dbReference>
<dbReference type="PANTHER" id="PTHR12924">
    <property type="entry name" value="TRANSLOCON-ASSOCIATED PROTEIN, ALPHA SUBUNIT"/>
    <property type="match status" value="1"/>
</dbReference>
<dbReference type="Pfam" id="PF03896">
    <property type="entry name" value="TRAP_alpha"/>
    <property type="match status" value="1"/>
</dbReference>